<gene>
    <name evidence="1" type="primary">pnp</name>
    <name type="ordered locus">IL0964</name>
</gene>
<comment type="function">
    <text evidence="1">Involved in mRNA degradation. Catalyzes the phosphorolysis of single-stranded polyribonucleotides processively in the 3'- to 5'-direction.</text>
</comment>
<comment type="catalytic activity">
    <reaction evidence="1">
        <text>RNA(n+1) + phosphate = RNA(n) + a ribonucleoside 5'-diphosphate</text>
        <dbReference type="Rhea" id="RHEA:22096"/>
        <dbReference type="Rhea" id="RHEA-COMP:14527"/>
        <dbReference type="Rhea" id="RHEA-COMP:17342"/>
        <dbReference type="ChEBI" id="CHEBI:43474"/>
        <dbReference type="ChEBI" id="CHEBI:57930"/>
        <dbReference type="ChEBI" id="CHEBI:140395"/>
        <dbReference type="EC" id="2.7.7.8"/>
    </reaction>
</comment>
<comment type="cofactor">
    <cofactor evidence="1">
        <name>Mg(2+)</name>
        <dbReference type="ChEBI" id="CHEBI:18420"/>
    </cofactor>
</comment>
<comment type="subunit">
    <text evidence="1">Component of the RNA degradosome, which is a multiprotein complex involved in RNA processing and mRNA degradation.</text>
</comment>
<comment type="subcellular location">
    <subcellularLocation>
        <location evidence="1">Cytoplasm</location>
    </subcellularLocation>
</comment>
<comment type="similarity">
    <text evidence="1">Belongs to the polyribonucleotide nucleotidyltransferase family.</text>
</comment>
<proteinExistence type="inferred from homology"/>
<evidence type="ECO:0000255" key="1">
    <source>
        <dbReference type="HAMAP-Rule" id="MF_01595"/>
    </source>
</evidence>
<evidence type="ECO:0000256" key="2">
    <source>
        <dbReference type="SAM" id="MobiDB-lite"/>
    </source>
</evidence>
<feature type="chain" id="PRO_0000329683" description="Polyribonucleotide nucleotidyltransferase">
    <location>
        <begin position="1"/>
        <end position="716"/>
    </location>
</feature>
<feature type="domain" description="KH" evidence="1">
    <location>
        <begin position="552"/>
        <end position="611"/>
    </location>
</feature>
<feature type="domain" description="S1 motif" evidence="1">
    <location>
        <begin position="621"/>
        <end position="689"/>
    </location>
</feature>
<feature type="region of interest" description="Disordered" evidence="2">
    <location>
        <begin position="689"/>
        <end position="716"/>
    </location>
</feature>
<feature type="compositionally biased region" description="Basic and acidic residues" evidence="2">
    <location>
        <begin position="689"/>
        <end position="698"/>
    </location>
</feature>
<feature type="compositionally biased region" description="Acidic residues" evidence="2">
    <location>
        <begin position="707"/>
        <end position="716"/>
    </location>
</feature>
<feature type="binding site" evidence="1">
    <location>
        <position position="485"/>
    </location>
    <ligand>
        <name>Mg(2+)</name>
        <dbReference type="ChEBI" id="CHEBI:18420"/>
    </ligand>
</feature>
<feature type="binding site" evidence="1">
    <location>
        <position position="491"/>
    </location>
    <ligand>
        <name>Mg(2+)</name>
        <dbReference type="ChEBI" id="CHEBI:18420"/>
    </ligand>
</feature>
<sequence length="716" mass="77625">MNPITKQFQYGQHTVTLETGVIARQATASVLASIDDTTVLVTVVAKKEAREGQNFFPLTVNYQEKTYAAGKIPGGFFKREGRPSENETLTCRLIDRPIRPLFPDGFMNEVQVVATVVSVNPQINPDIVALIGTSAALSISGVPFAGPIGAARVGVVNDEYVLNPTADELENSKLDLVVAGTDKAVLMVESEAQLLSEDQMLGAVMYGHEAMQDVIKAITEFTAEAGKEKWDWQAPAKDESLQTKIRELAEQGIGEAYRTTDKAERKGKLDQVKEQMVEKLTAEDENVDLEESGKIFHDLESDIVRSRIIAGEKRIDGRDPDMVRAISVATGVLPRTHGSALFTRGETQALVTATLGTDRDAQMIDELTGMNTNRFMLHYNFPPYCVGETGMVGSPKRREIGHGRLAKRGIQAVMPSHDEFPYTIRVVSEITESNGSSSMASVCGSSLALMDAGVPIKSSVAGIAMGLVKEGDKHVVLSDILGDEDHLGDMDFKVAGNTDGITALQMDIKIDGITRDIMESALAQAKSARLHILKVMDEAIGGHREELSTYAPRFTTIKIDQDKIKDVIGKGGAVIRELTESTNTNIEIGDDGTIKVAASDQADADAAIEKIKQLTANVEVGKIYQGKVARIVDFGAFVTVLPGKDGLVHISQIAEERVNDVNEYLKVGDVVPVKVLEIDRQGRVRLSMKEAAEKKEEPAPEAPAEPAAEEENKSEE</sequence>
<keyword id="KW-0963">Cytoplasm</keyword>
<keyword id="KW-0460">Magnesium</keyword>
<keyword id="KW-0479">Metal-binding</keyword>
<keyword id="KW-0548">Nucleotidyltransferase</keyword>
<keyword id="KW-1185">Reference proteome</keyword>
<keyword id="KW-0694">RNA-binding</keyword>
<keyword id="KW-0808">Transferase</keyword>
<organism>
    <name type="scientific">Idiomarina loihiensis (strain ATCC BAA-735 / DSM 15497 / L2-TR)</name>
    <dbReference type="NCBI Taxonomy" id="283942"/>
    <lineage>
        <taxon>Bacteria</taxon>
        <taxon>Pseudomonadati</taxon>
        <taxon>Pseudomonadota</taxon>
        <taxon>Gammaproteobacteria</taxon>
        <taxon>Alteromonadales</taxon>
        <taxon>Idiomarinaceae</taxon>
        <taxon>Idiomarina</taxon>
    </lineage>
</organism>
<accession>Q5QYE1</accession>
<name>PNP_IDILO</name>
<protein>
    <recommendedName>
        <fullName evidence="1">Polyribonucleotide nucleotidyltransferase</fullName>
        <ecNumber evidence="1">2.7.7.8</ecNumber>
    </recommendedName>
    <alternativeName>
        <fullName evidence="1">Polynucleotide phosphorylase</fullName>
        <shortName evidence="1">PNPase</shortName>
    </alternativeName>
</protein>
<dbReference type="EC" id="2.7.7.8" evidence="1"/>
<dbReference type="EMBL" id="AE017340">
    <property type="protein sequence ID" value="AAV81804.1"/>
    <property type="molecule type" value="Genomic_DNA"/>
</dbReference>
<dbReference type="RefSeq" id="WP_011234215.1">
    <property type="nucleotide sequence ID" value="NC_006512.1"/>
</dbReference>
<dbReference type="SMR" id="Q5QYE1"/>
<dbReference type="STRING" id="283942.IL0964"/>
<dbReference type="GeneID" id="41336124"/>
<dbReference type="KEGG" id="ilo:IL0964"/>
<dbReference type="eggNOG" id="COG1185">
    <property type="taxonomic scope" value="Bacteria"/>
</dbReference>
<dbReference type="HOGENOM" id="CLU_004217_2_2_6"/>
<dbReference type="OrthoDB" id="9804305at2"/>
<dbReference type="Proteomes" id="UP000001171">
    <property type="component" value="Chromosome"/>
</dbReference>
<dbReference type="GO" id="GO:0005829">
    <property type="term" value="C:cytosol"/>
    <property type="evidence" value="ECO:0007669"/>
    <property type="project" value="TreeGrafter"/>
</dbReference>
<dbReference type="GO" id="GO:0000175">
    <property type="term" value="F:3'-5'-RNA exonuclease activity"/>
    <property type="evidence" value="ECO:0007669"/>
    <property type="project" value="TreeGrafter"/>
</dbReference>
<dbReference type="GO" id="GO:0000287">
    <property type="term" value="F:magnesium ion binding"/>
    <property type="evidence" value="ECO:0007669"/>
    <property type="project" value="UniProtKB-UniRule"/>
</dbReference>
<dbReference type="GO" id="GO:0004654">
    <property type="term" value="F:polyribonucleotide nucleotidyltransferase activity"/>
    <property type="evidence" value="ECO:0007669"/>
    <property type="project" value="UniProtKB-UniRule"/>
</dbReference>
<dbReference type="GO" id="GO:0003723">
    <property type="term" value="F:RNA binding"/>
    <property type="evidence" value="ECO:0007669"/>
    <property type="project" value="UniProtKB-UniRule"/>
</dbReference>
<dbReference type="GO" id="GO:0006402">
    <property type="term" value="P:mRNA catabolic process"/>
    <property type="evidence" value="ECO:0007669"/>
    <property type="project" value="UniProtKB-UniRule"/>
</dbReference>
<dbReference type="GO" id="GO:0006396">
    <property type="term" value="P:RNA processing"/>
    <property type="evidence" value="ECO:0007669"/>
    <property type="project" value="InterPro"/>
</dbReference>
<dbReference type="CDD" id="cd02393">
    <property type="entry name" value="KH-I_PNPase"/>
    <property type="match status" value="1"/>
</dbReference>
<dbReference type="CDD" id="cd11363">
    <property type="entry name" value="RNase_PH_PNPase_1"/>
    <property type="match status" value="1"/>
</dbReference>
<dbReference type="CDD" id="cd11364">
    <property type="entry name" value="RNase_PH_PNPase_2"/>
    <property type="match status" value="1"/>
</dbReference>
<dbReference type="CDD" id="cd04472">
    <property type="entry name" value="S1_PNPase"/>
    <property type="match status" value="1"/>
</dbReference>
<dbReference type="FunFam" id="2.40.50.140:FF:000023">
    <property type="entry name" value="Polyribonucleotide nucleotidyltransferase"/>
    <property type="match status" value="1"/>
</dbReference>
<dbReference type="FunFam" id="3.30.1370.10:FF:000001">
    <property type="entry name" value="Polyribonucleotide nucleotidyltransferase"/>
    <property type="match status" value="1"/>
</dbReference>
<dbReference type="FunFam" id="3.30.230.70:FF:000001">
    <property type="entry name" value="Polyribonucleotide nucleotidyltransferase"/>
    <property type="match status" value="1"/>
</dbReference>
<dbReference type="FunFam" id="3.30.230.70:FF:000002">
    <property type="entry name" value="Polyribonucleotide nucleotidyltransferase"/>
    <property type="match status" value="1"/>
</dbReference>
<dbReference type="Gene3D" id="3.30.230.70">
    <property type="entry name" value="GHMP Kinase, N-terminal domain"/>
    <property type="match status" value="2"/>
</dbReference>
<dbReference type="Gene3D" id="3.30.1370.10">
    <property type="entry name" value="K Homology domain, type 1"/>
    <property type="match status" value="1"/>
</dbReference>
<dbReference type="Gene3D" id="2.40.50.140">
    <property type="entry name" value="Nucleic acid-binding proteins"/>
    <property type="match status" value="1"/>
</dbReference>
<dbReference type="HAMAP" id="MF_01595">
    <property type="entry name" value="PNPase"/>
    <property type="match status" value="1"/>
</dbReference>
<dbReference type="InterPro" id="IPR001247">
    <property type="entry name" value="ExoRNase_PH_dom1"/>
</dbReference>
<dbReference type="InterPro" id="IPR015847">
    <property type="entry name" value="ExoRNase_PH_dom2"/>
</dbReference>
<dbReference type="InterPro" id="IPR036345">
    <property type="entry name" value="ExoRNase_PH_dom2_sf"/>
</dbReference>
<dbReference type="InterPro" id="IPR004087">
    <property type="entry name" value="KH_dom"/>
</dbReference>
<dbReference type="InterPro" id="IPR004088">
    <property type="entry name" value="KH_dom_type_1"/>
</dbReference>
<dbReference type="InterPro" id="IPR036612">
    <property type="entry name" value="KH_dom_type_1_sf"/>
</dbReference>
<dbReference type="InterPro" id="IPR012340">
    <property type="entry name" value="NA-bd_OB-fold"/>
</dbReference>
<dbReference type="InterPro" id="IPR012162">
    <property type="entry name" value="PNPase"/>
</dbReference>
<dbReference type="InterPro" id="IPR027408">
    <property type="entry name" value="PNPase/RNase_PH_dom_sf"/>
</dbReference>
<dbReference type="InterPro" id="IPR015848">
    <property type="entry name" value="PNPase_PH_RNA-bd_bac/org-type"/>
</dbReference>
<dbReference type="InterPro" id="IPR036456">
    <property type="entry name" value="PNPase_PH_RNA-bd_sf"/>
</dbReference>
<dbReference type="InterPro" id="IPR020568">
    <property type="entry name" value="Ribosomal_Su5_D2-typ_SF"/>
</dbReference>
<dbReference type="InterPro" id="IPR003029">
    <property type="entry name" value="S1_domain"/>
</dbReference>
<dbReference type="NCBIfam" id="TIGR03591">
    <property type="entry name" value="polynuc_phos"/>
    <property type="match status" value="1"/>
</dbReference>
<dbReference type="NCBIfam" id="NF008805">
    <property type="entry name" value="PRK11824.1"/>
    <property type="match status" value="1"/>
</dbReference>
<dbReference type="PANTHER" id="PTHR11252">
    <property type="entry name" value="POLYRIBONUCLEOTIDE NUCLEOTIDYLTRANSFERASE"/>
    <property type="match status" value="1"/>
</dbReference>
<dbReference type="PANTHER" id="PTHR11252:SF0">
    <property type="entry name" value="POLYRIBONUCLEOTIDE NUCLEOTIDYLTRANSFERASE 1, MITOCHONDRIAL"/>
    <property type="match status" value="1"/>
</dbReference>
<dbReference type="Pfam" id="PF00013">
    <property type="entry name" value="KH_1"/>
    <property type="match status" value="1"/>
</dbReference>
<dbReference type="Pfam" id="PF03726">
    <property type="entry name" value="PNPase"/>
    <property type="match status" value="1"/>
</dbReference>
<dbReference type="Pfam" id="PF01138">
    <property type="entry name" value="RNase_PH"/>
    <property type="match status" value="2"/>
</dbReference>
<dbReference type="Pfam" id="PF03725">
    <property type="entry name" value="RNase_PH_C"/>
    <property type="match status" value="2"/>
</dbReference>
<dbReference type="Pfam" id="PF00575">
    <property type="entry name" value="S1"/>
    <property type="match status" value="1"/>
</dbReference>
<dbReference type="PIRSF" id="PIRSF005499">
    <property type="entry name" value="PNPase"/>
    <property type="match status" value="1"/>
</dbReference>
<dbReference type="SMART" id="SM00322">
    <property type="entry name" value="KH"/>
    <property type="match status" value="1"/>
</dbReference>
<dbReference type="SMART" id="SM00316">
    <property type="entry name" value="S1"/>
    <property type="match status" value="1"/>
</dbReference>
<dbReference type="SUPFAM" id="SSF54791">
    <property type="entry name" value="Eukaryotic type KH-domain (KH-domain type I)"/>
    <property type="match status" value="1"/>
</dbReference>
<dbReference type="SUPFAM" id="SSF50249">
    <property type="entry name" value="Nucleic acid-binding proteins"/>
    <property type="match status" value="1"/>
</dbReference>
<dbReference type="SUPFAM" id="SSF46915">
    <property type="entry name" value="Polynucleotide phosphorylase/guanosine pentaphosphate synthase (PNPase/GPSI), domain 3"/>
    <property type="match status" value="1"/>
</dbReference>
<dbReference type="SUPFAM" id="SSF55666">
    <property type="entry name" value="Ribonuclease PH domain 2-like"/>
    <property type="match status" value="2"/>
</dbReference>
<dbReference type="SUPFAM" id="SSF54211">
    <property type="entry name" value="Ribosomal protein S5 domain 2-like"/>
    <property type="match status" value="2"/>
</dbReference>
<dbReference type="PROSITE" id="PS50084">
    <property type="entry name" value="KH_TYPE_1"/>
    <property type="match status" value="1"/>
</dbReference>
<dbReference type="PROSITE" id="PS50126">
    <property type="entry name" value="S1"/>
    <property type="match status" value="1"/>
</dbReference>
<reference key="1">
    <citation type="journal article" date="2004" name="Proc. Natl. Acad. Sci. U.S.A.">
        <title>Genome sequence of the deep-sea gamma-proteobacterium Idiomarina loihiensis reveals amino acid fermentation as a source of carbon and energy.</title>
        <authorList>
            <person name="Hou S."/>
            <person name="Saw J.H."/>
            <person name="Lee K.S."/>
            <person name="Freitas T.A."/>
            <person name="Belisle C."/>
            <person name="Kawarabayasi Y."/>
            <person name="Donachie S.P."/>
            <person name="Pikina A."/>
            <person name="Galperin M.Y."/>
            <person name="Koonin E.V."/>
            <person name="Makarova K.S."/>
            <person name="Omelchenko M.V."/>
            <person name="Sorokin A."/>
            <person name="Wolf Y.I."/>
            <person name="Li Q.X."/>
            <person name="Keum Y.S."/>
            <person name="Campbell S."/>
            <person name="Denery J."/>
            <person name="Aizawa S."/>
            <person name="Shibata S."/>
            <person name="Malahoff A."/>
            <person name="Alam M."/>
        </authorList>
    </citation>
    <scope>NUCLEOTIDE SEQUENCE [LARGE SCALE GENOMIC DNA]</scope>
    <source>
        <strain>ATCC BAA-735 / DSM 15497 / L2-TR</strain>
    </source>
</reference>